<reference key="1">
    <citation type="journal article" date="2009" name="Stand. Genomic Sci.">
        <title>Complete genome sequence of Methanoculleus marisnigri Romesser et al. 1981 type strain JR1.</title>
        <authorList>
            <person name="Anderson I.J."/>
            <person name="Sieprawska-Lupa M."/>
            <person name="Lapidus A."/>
            <person name="Nolan M."/>
            <person name="Copeland A."/>
            <person name="Glavina Del Rio T."/>
            <person name="Tice H."/>
            <person name="Dalin E."/>
            <person name="Barry K."/>
            <person name="Saunders E."/>
            <person name="Han C."/>
            <person name="Brettin T."/>
            <person name="Detter J.C."/>
            <person name="Bruce D."/>
            <person name="Mikhailova N."/>
            <person name="Pitluck S."/>
            <person name="Hauser L."/>
            <person name="Land M."/>
            <person name="Lucas S."/>
            <person name="Richardson P."/>
            <person name="Whitman W.B."/>
            <person name="Kyrpides N.C."/>
        </authorList>
    </citation>
    <scope>NUCLEOTIDE SEQUENCE [LARGE SCALE GENOMIC DNA]</scope>
    <source>
        <strain>ATCC 35101 / DSM 1498 / JR1</strain>
    </source>
</reference>
<name>OTC_METMJ</name>
<gene>
    <name evidence="2" type="primary">argF</name>
    <name type="ordered locus">Memar_0999</name>
</gene>
<proteinExistence type="inferred from homology"/>
<feature type="chain" id="PRO_1000084851" description="Ornithine carbamoyltransferase">
    <location>
        <begin position="1"/>
        <end position="309"/>
    </location>
</feature>
<feature type="binding site" evidence="2">
    <location>
        <begin position="52"/>
        <end position="55"/>
    </location>
    <ligand>
        <name>carbamoyl phosphate</name>
        <dbReference type="ChEBI" id="CHEBI:58228"/>
    </ligand>
</feature>
<feature type="binding site" evidence="2">
    <location>
        <position position="79"/>
    </location>
    <ligand>
        <name>carbamoyl phosphate</name>
        <dbReference type="ChEBI" id="CHEBI:58228"/>
    </ligand>
</feature>
<feature type="binding site" evidence="2">
    <location>
        <position position="103"/>
    </location>
    <ligand>
        <name>carbamoyl phosphate</name>
        <dbReference type="ChEBI" id="CHEBI:58228"/>
    </ligand>
</feature>
<feature type="binding site" evidence="2">
    <location>
        <begin position="130"/>
        <end position="133"/>
    </location>
    <ligand>
        <name>carbamoyl phosphate</name>
        <dbReference type="ChEBI" id="CHEBI:58228"/>
    </ligand>
</feature>
<feature type="binding site" evidence="2">
    <location>
        <position position="161"/>
    </location>
    <ligand>
        <name>L-ornithine</name>
        <dbReference type="ChEBI" id="CHEBI:46911"/>
    </ligand>
</feature>
<feature type="binding site" evidence="2">
    <location>
        <position position="221"/>
    </location>
    <ligand>
        <name>L-ornithine</name>
        <dbReference type="ChEBI" id="CHEBI:46911"/>
    </ligand>
</feature>
<feature type="binding site" evidence="2">
    <location>
        <begin position="225"/>
        <end position="226"/>
    </location>
    <ligand>
        <name>L-ornithine</name>
        <dbReference type="ChEBI" id="CHEBI:46911"/>
    </ligand>
</feature>
<feature type="binding site" evidence="2">
    <location>
        <begin position="261"/>
        <end position="262"/>
    </location>
    <ligand>
        <name>carbamoyl phosphate</name>
        <dbReference type="ChEBI" id="CHEBI:58228"/>
    </ligand>
</feature>
<feature type="binding site" evidence="2">
    <location>
        <position position="289"/>
    </location>
    <ligand>
        <name>carbamoyl phosphate</name>
        <dbReference type="ChEBI" id="CHEBI:58228"/>
    </ligand>
</feature>
<organism>
    <name type="scientific">Methanoculleus marisnigri (strain ATCC 35101 / DSM 1498 / JR1)</name>
    <dbReference type="NCBI Taxonomy" id="368407"/>
    <lineage>
        <taxon>Archaea</taxon>
        <taxon>Methanobacteriati</taxon>
        <taxon>Methanobacteriota</taxon>
        <taxon>Stenosarchaea group</taxon>
        <taxon>Methanomicrobia</taxon>
        <taxon>Methanomicrobiales</taxon>
        <taxon>Methanomicrobiaceae</taxon>
        <taxon>Methanoculleus</taxon>
    </lineage>
</organism>
<accession>A3CU82</accession>
<sequence>MKKDFLSILDIGEYELESIVADAVRLKRLKSAGTAHEFLRGKSLGMIFEKASTRTRVSFEVGMSDLGGHALFLNPQDMQLGRGEEIRDTARVLARYVDAVMIRAYSHAAIEEFARYANVPVVNGLSDRLHPCQVLADIMTLSERFGDLHGLKLAWVGDGNNVCNSWLLSSALTGMEIAVASPPRYRPRDEIVDQARAAGGKVTVVTDPDEAVRDADVLYTDIWVSMGDEQERAERLQALKGYTIDSRLLAQASPDALVMHCLPAHRGEEITDEVMEGPQSIVWDQAENRLHAQKALLVRLIAGGMASVD</sequence>
<comment type="function">
    <text evidence="1">Reversibly catalyzes the transfer of the carbamoyl group from carbamoyl phosphate (CP) to the N(epsilon) atom of ornithine (ORN) to produce L-citrulline.</text>
</comment>
<comment type="catalytic activity">
    <reaction evidence="2">
        <text>carbamoyl phosphate + L-ornithine = L-citrulline + phosphate + H(+)</text>
        <dbReference type="Rhea" id="RHEA:19513"/>
        <dbReference type="ChEBI" id="CHEBI:15378"/>
        <dbReference type="ChEBI" id="CHEBI:43474"/>
        <dbReference type="ChEBI" id="CHEBI:46911"/>
        <dbReference type="ChEBI" id="CHEBI:57743"/>
        <dbReference type="ChEBI" id="CHEBI:58228"/>
        <dbReference type="EC" id="2.1.3.3"/>
    </reaction>
</comment>
<comment type="pathway">
    <text evidence="2">Amino-acid biosynthesis; L-arginine biosynthesis; L-arginine from L-ornithine and carbamoyl phosphate: step 1/3.</text>
</comment>
<comment type="subcellular location">
    <subcellularLocation>
        <location evidence="2">Cytoplasm</location>
    </subcellularLocation>
</comment>
<comment type="similarity">
    <text evidence="2">Belongs to the aspartate/ornithine carbamoyltransferase superfamily. OTCase family.</text>
</comment>
<protein>
    <recommendedName>
        <fullName evidence="2">Ornithine carbamoyltransferase</fullName>
        <shortName evidence="2">OTCase</shortName>
        <ecNumber evidence="2">2.1.3.3</ecNumber>
    </recommendedName>
</protein>
<keyword id="KW-0028">Amino-acid biosynthesis</keyword>
<keyword id="KW-0055">Arginine biosynthesis</keyword>
<keyword id="KW-0963">Cytoplasm</keyword>
<keyword id="KW-0808">Transferase</keyword>
<evidence type="ECO:0000250" key="1"/>
<evidence type="ECO:0000255" key="2">
    <source>
        <dbReference type="HAMAP-Rule" id="MF_01109"/>
    </source>
</evidence>
<dbReference type="EC" id="2.1.3.3" evidence="2"/>
<dbReference type="EMBL" id="CP000562">
    <property type="protein sequence ID" value="ABN56932.1"/>
    <property type="molecule type" value="Genomic_DNA"/>
</dbReference>
<dbReference type="RefSeq" id="WP_011843843.1">
    <property type="nucleotide sequence ID" value="NC_009051.1"/>
</dbReference>
<dbReference type="SMR" id="A3CU82"/>
<dbReference type="STRING" id="368407.Memar_0999"/>
<dbReference type="GeneID" id="4846162"/>
<dbReference type="GeneID" id="76731570"/>
<dbReference type="KEGG" id="mem:Memar_0999"/>
<dbReference type="eggNOG" id="arCOG00912">
    <property type="taxonomic scope" value="Archaea"/>
</dbReference>
<dbReference type="HOGENOM" id="CLU_043846_3_2_2"/>
<dbReference type="OrthoDB" id="4696at2157"/>
<dbReference type="UniPathway" id="UPA00068">
    <property type="reaction ID" value="UER00112"/>
</dbReference>
<dbReference type="Proteomes" id="UP000002146">
    <property type="component" value="Chromosome"/>
</dbReference>
<dbReference type="GO" id="GO:0005737">
    <property type="term" value="C:cytoplasm"/>
    <property type="evidence" value="ECO:0007669"/>
    <property type="project" value="UniProtKB-SubCell"/>
</dbReference>
<dbReference type="GO" id="GO:0016597">
    <property type="term" value="F:amino acid binding"/>
    <property type="evidence" value="ECO:0007669"/>
    <property type="project" value="InterPro"/>
</dbReference>
<dbReference type="GO" id="GO:0004585">
    <property type="term" value="F:ornithine carbamoyltransferase activity"/>
    <property type="evidence" value="ECO:0007669"/>
    <property type="project" value="UniProtKB-UniRule"/>
</dbReference>
<dbReference type="GO" id="GO:0042450">
    <property type="term" value="P:arginine biosynthetic process via ornithine"/>
    <property type="evidence" value="ECO:0007669"/>
    <property type="project" value="TreeGrafter"/>
</dbReference>
<dbReference type="GO" id="GO:0019240">
    <property type="term" value="P:citrulline biosynthetic process"/>
    <property type="evidence" value="ECO:0007669"/>
    <property type="project" value="TreeGrafter"/>
</dbReference>
<dbReference type="GO" id="GO:0006526">
    <property type="term" value="P:L-arginine biosynthetic process"/>
    <property type="evidence" value="ECO:0007669"/>
    <property type="project" value="UniProtKB-UniRule"/>
</dbReference>
<dbReference type="FunFam" id="3.40.50.1370:FF:000008">
    <property type="entry name" value="Ornithine carbamoyltransferase"/>
    <property type="match status" value="1"/>
</dbReference>
<dbReference type="Gene3D" id="3.40.50.1370">
    <property type="entry name" value="Aspartate/ornithine carbamoyltransferase"/>
    <property type="match status" value="2"/>
</dbReference>
<dbReference type="HAMAP" id="MF_01109">
    <property type="entry name" value="OTCase"/>
    <property type="match status" value="1"/>
</dbReference>
<dbReference type="InterPro" id="IPR006132">
    <property type="entry name" value="Asp/Orn_carbamoyltranf_P-bd"/>
</dbReference>
<dbReference type="InterPro" id="IPR006130">
    <property type="entry name" value="Asp/Orn_carbamoylTrfase"/>
</dbReference>
<dbReference type="InterPro" id="IPR036901">
    <property type="entry name" value="Asp/Orn_carbamoylTrfase_sf"/>
</dbReference>
<dbReference type="InterPro" id="IPR006131">
    <property type="entry name" value="Asp_carbamoyltransf_Asp/Orn-bd"/>
</dbReference>
<dbReference type="InterPro" id="IPR002292">
    <property type="entry name" value="Orn/put_carbamltrans"/>
</dbReference>
<dbReference type="InterPro" id="IPR024904">
    <property type="entry name" value="OTCase_ArgI"/>
</dbReference>
<dbReference type="NCBIfam" id="TIGR00658">
    <property type="entry name" value="orni_carb_tr"/>
    <property type="match status" value="1"/>
</dbReference>
<dbReference type="NCBIfam" id="NF001986">
    <property type="entry name" value="PRK00779.1"/>
    <property type="match status" value="1"/>
</dbReference>
<dbReference type="PANTHER" id="PTHR45753">
    <property type="entry name" value="ORNITHINE CARBAMOYLTRANSFERASE, MITOCHONDRIAL"/>
    <property type="match status" value="1"/>
</dbReference>
<dbReference type="PANTHER" id="PTHR45753:SF3">
    <property type="entry name" value="ORNITHINE TRANSCARBAMYLASE, MITOCHONDRIAL"/>
    <property type="match status" value="1"/>
</dbReference>
<dbReference type="Pfam" id="PF00185">
    <property type="entry name" value="OTCace"/>
    <property type="match status" value="1"/>
</dbReference>
<dbReference type="Pfam" id="PF02729">
    <property type="entry name" value="OTCace_N"/>
    <property type="match status" value="1"/>
</dbReference>
<dbReference type="PRINTS" id="PR00100">
    <property type="entry name" value="AOTCASE"/>
</dbReference>
<dbReference type="PRINTS" id="PR00102">
    <property type="entry name" value="OTCASE"/>
</dbReference>
<dbReference type="SUPFAM" id="SSF53671">
    <property type="entry name" value="Aspartate/ornithine carbamoyltransferase"/>
    <property type="match status" value="1"/>
</dbReference>
<dbReference type="PROSITE" id="PS00097">
    <property type="entry name" value="CARBAMOYLTRANSFERASE"/>
    <property type="match status" value="1"/>
</dbReference>